<gene>
    <name evidence="1" type="primary">yacG</name>
    <name type="ordered locus">Shal_0465</name>
</gene>
<comment type="function">
    <text evidence="1">Inhibits all the catalytic activities of DNA gyrase by preventing its interaction with DNA. Acts by binding directly to the C-terminal domain of GyrB, which probably disrupts DNA binding by the gyrase.</text>
</comment>
<comment type="cofactor">
    <cofactor evidence="1">
        <name>Zn(2+)</name>
        <dbReference type="ChEBI" id="CHEBI:29105"/>
    </cofactor>
    <text evidence="1">Binds 1 zinc ion.</text>
</comment>
<comment type="subunit">
    <text evidence="1">Interacts with GyrB.</text>
</comment>
<comment type="similarity">
    <text evidence="1">Belongs to the DNA gyrase inhibitor YacG family.</text>
</comment>
<reference key="1">
    <citation type="submission" date="2008-01" db="EMBL/GenBank/DDBJ databases">
        <title>Complete sequence of Shewanella halifaxensis HAW-EB4.</title>
        <authorList>
            <consortium name="US DOE Joint Genome Institute"/>
            <person name="Copeland A."/>
            <person name="Lucas S."/>
            <person name="Lapidus A."/>
            <person name="Glavina del Rio T."/>
            <person name="Dalin E."/>
            <person name="Tice H."/>
            <person name="Bruce D."/>
            <person name="Goodwin L."/>
            <person name="Pitluck S."/>
            <person name="Sims D."/>
            <person name="Brettin T."/>
            <person name="Detter J.C."/>
            <person name="Han C."/>
            <person name="Kuske C.R."/>
            <person name="Schmutz J."/>
            <person name="Larimer F."/>
            <person name="Land M."/>
            <person name="Hauser L."/>
            <person name="Kyrpides N."/>
            <person name="Kim E."/>
            <person name="Zhao J.-S."/>
            <person name="Richardson P."/>
        </authorList>
    </citation>
    <scope>NUCLEOTIDE SEQUENCE [LARGE SCALE GENOMIC DNA]</scope>
    <source>
        <strain>HAW-EB4</strain>
    </source>
</reference>
<accession>B0TQP7</accession>
<dbReference type="EMBL" id="CP000931">
    <property type="protein sequence ID" value="ABZ75040.1"/>
    <property type="molecule type" value="Genomic_DNA"/>
</dbReference>
<dbReference type="RefSeq" id="WP_012275594.1">
    <property type="nucleotide sequence ID" value="NC_010334.1"/>
</dbReference>
<dbReference type="SMR" id="B0TQP7"/>
<dbReference type="STRING" id="458817.Shal_0465"/>
<dbReference type="KEGG" id="shl:Shal_0465"/>
<dbReference type="eggNOG" id="COG3024">
    <property type="taxonomic scope" value="Bacteria"/>
</dbReference>
<dbReference type="HOGENOM" id="CLU_178280_1_0_6"/>
<dbReference type="OrthoDB" id="9809663at2"/>
<dbReference type="Proteomes" id="UP000001317">
    <property type="component" value="Chromosome"/>
</dbReference>
<dbReference type="GO" id="GO:0008657">
    <property type="term" value="F:DNA topoisomerase type II (double strand cut, ATP-hydrolyzing) inhibitor activity"/>
    <property type="evidence" value="ECO:0007669"/>
    <property type="project" value="UniProtKB-UniRule"/>
</dbReference>
<dbReference type="GO" id="GO:0008270">
    <property type="term" value="F:zinc ion binding"/>
    <property type="evidence" value="ECO:0007669"/>
    <property type="project" value="UniProtKB-UniRule"/>
</dbReference>
<dbReference type="GO" id="GO:0006355">
    <property type="term" value="P:regulation of DNA-templated transcription"/>
    <property type="evidence" value="ECO:0007669"/>
    <property type="project" value="InterPro"/>
</dbReference>
<dbReference type="Gene3D" id="3.30.50.10">
    <property type="entry name" value="Erythroid Transcription Factor GATA-1, subunit A"/>
    <property type="match status" value="1"/>
</dbReference>
<dbReference type="HAMAP" id="MF_00649">
    <property type="entry name" value="DNA_gyrase_inhibitor_YacG"/>
    <property type="match status" value="1"/>
</dbReference>
<dbReference type="InterPro" id="IPR005584">
    <property type="entry name" value="DNA_gyrase_inhibitor_YacG"/>
</dbReference>
<dbReference type="InterPro" id="IPR013088">
    <property type="entry name" value="Znf_NHR/GATA"/>
</dbReference>
<dbReference type="NCBIfam" id="NF001638">
    <property type="entry name" value="PRK00418.1"/>
    <property type="match status" value="1"/>
</dbReference>
<dbReference type="PANTHER" id="PTHR36150">
    <property type="entry name" value="DNA GYRASE INHIBITOR YACG"/>
    <property type="match status" value="1"/>
</dbReference>
<dbReference type="PANTHER" id="PTHR36150:SF1">
    <property type="entry name" value="DNA GYRASE INHIBITOR YACG"/>
    <property type="match status" value="1"/>
</dbReference>
<dbReference type="Pfam" id="PF03884">
    <property type="entry name" value="YacG"/>
    <property type="match status" value="1"/>
</dbReference>
<dbReference type="SUPFAM" id="SSF57716">
    <property type="entry name" value="Glucocorticoid receptor-like (DNA-binding domain)"/>
    <property type="match status" value="1"/>
</dbReference>
<evidence type="ECO:0000255" key="1">
    <source>
        <dbReference type="HAMAP-Rule" id="MF_00649"/>
    </source>
</evidence>
<organism>
    <name type="scientific">Shewanella halifaxensis (strain HAW-EB4)</name>
    <dbReference type="NCBI Taxonomy" id="458817"/>
    <lineage>
        <taxon>Bacteria</taxon>
        <taxon>Pseudomonadati</taxon>
        <taxon>Pseudomonadota</taxon>
        <taxon>Gammaproteobacteria</taxon>
        <taxon>Alteromonadales</taxon>
        <taxon>Shewanellaceae</taxon>
        <taxon>Shewanella</taxon>
    </lineage>
</organism>
<name>YACG_SHEHH</name>
<feature type="chain" id="PRO_1000082728" description="DNA gyrase inhibitor YacG">
    <location>
        <begin position="1"/>
        <end position="79"/>
    </location>
</feature>
<feature type="binding site" evidence="1">
    <location>
        <position position="7"/>
    </location>
    <ligand>
        <name>Zn(2+)</name>
        <dbReference type="ChEBI" id="CHEBI:29105"/>
    </ligand>
</feature>
<feature type="binding site" evidence="1">
    <location>
        <position position="10"/>
    </location>
    <ligand>
        <name>Zn(2+)</name>
        <dbReference type="ChEBI" id="CHEBI:29105"/>
    </ligand>
</feature>
<feature type="binding site" evidence="1">
    <location>
        <position position="26"/>
    </location>
    <ligand>
        <name>Zn(2+)</name>
        <dbReference type="ChEBI" id="CHEBI:29105"/>
    </ligand>
</feature>
<feature type="binding site" evidence="1">
    <location>
        <position position="30"/>
    </location>
    <ligand>
        <name>Zn(2+)</name>
        <dbReference type="ChEBI" id="CHEBI:29105"/>
    </ligand>
</feature>
<keyword id="KW-0479">Metal-binding</keyword>
<keyword id="KW-0862">Zinc</keyword>
<proteinExistence type="inferred from homology"/>
<sequence>MSLTVKCPTCQAPVTWSADSEFKPFCSERCKLIDLGDWASEKNVIPVKSEFDPEMLDQLGYDEADFFLDENPFKDDKNQ</sequence>
<protein>
    <recommendedName>
        <fullName evidence="1">DNA gyrase inhibitor YacG</fullName>
    </recommendedName>
</protein>